<keyword id="KW-0028">Amino-acid biosynthesis</keyword>
<keyword id="KW-0963">Cytoplasm</keyword>
<keyword id="KW-0554">One-carbon metabolism</keyword>
<keyword id="KW-0663">Pyridoxal phosphate</keyword>
<keyword id="KW-0808">Transferase</keyword>
<protein>
    <recommendedName>
        <fullName evidence="1">Serine hydroxymethyltransferase</fullName>
        <shortName evidence="1">SHMT</shortName>
        <shortName evidence="1">Serine methylase</shortName>
        <ecNumber evidence="1">2.1.2.1</ecNumber>
    </recommendedName>
</protein>
<evidence type="ECO:0000255" key="1">
    <source>
        <dbReference type="HAMAP-Rule" id="MF_00051"/>
    </source>
</evidence>
<comment type="function">
    <text evidence="1">Catalyzes the reversible interconversion of serine and glycine with tetrahydrofolate (THF) serving as the one-carbon carrier. Also exhibits THF-independent aldolase activity toward beta-hydroxyamino acids, producing glycine and aldehydes, via a retro-aldol mechanism.</text>
</comment>
<comment type="catalytic activity">
    <reaction evidence="1">
        <text>(6R)-5,10-methylene-5,6,7,8-tetrahydrofolate + glycine + H2O = (6S)-5,6,7,8-tetrahydrofolate + L-serine</text>
        <dbReference type="Rhea" id="RHEA:15481"/>
        <dbReference type="ChEBI" id="CHEBI:15377"/>
        <dbReference type="ChEBI" id="CHEBI:15636"/>
        <dbReference type="ChEBI" id="CHEBI:33384"/>
        <dbReference type="ChEBI" id="CHEBI:57305"/>
        <dbReference type="ChEBI" id="CHEBI:57453"/>
        <dbReference type="EC" id="2.1.2.1"/>
    </reaction>
</comment>
<comment type="cofactor">
    <cofactor evidence="1">
        <name>pyridoxal 5'-phosphate</name>
        <dbReference type="ChEBI" id="CHEBI:597326"/>
    </cofactor>
</comment>
<comment type="pathway">
    <text evidence="1">One-carbon metabolism; tetrahydrofolate interconversion.</text>
</comment>
<comment type="pathway">
    <text evidence="1">Amino-acid biosynthesis; glycine biosynthesis; glycine from L-serine: step 1/1.</text>
</comment>
<comment type="subunit">
    <text evidence="1">Homodimer.</text>
</comment>
<comment type="subcellular location">
    <subcellularLocation>
        <location evidence="1">Cytoplasm</location>
    </subcellularLocation>
</comment>
<comment type="similarity">
    <text evidence="1">Belongs to the SHMT family.</text>
</comment>
<organism>
    <name type="scientific">Halobacterium salinarum (strain ATCC 29341 / DSM 671 / R1)</name>
    <dbReference type="NCBI Taxonomy" id="478009"/>
    <lineage>
        <taxon>Archaea</taxon>
        <taxon>Methanobacteriati</taxon>
        <taxon>Methanobacteriota</taxon>
        <taxon>Stenosarchaea group</taxon>
        <taxon>Halobacteria</taxon>
        <taxon>Halobacteriales</taxon>
        <taxon>Halobacteriaceae</taxon>
        <taxon>Halobacterium</taxon>
        <taxon>Halobacterium salinarum NRC-34001</taxon>
    </lineage>
</organism>
<feature type="chain" id="PRO_0000369966" description="Serine hydroxymethyltransferase">
    <location>
        <begin position="1"/>
        <end position="415"/>
    </location>
</feature>
<feature type="binding site" evidence="1">
    <location>
        <position position="119"/>
    </location>
    <ligand>
        <name>(6S)-5,6,7,8-tetrahydrofolate</name>
        <dbReference type="ChEBI" id="CHEBI:57453"/>
    </ligand>
</feature>
<feature type="binding site" evidence="1">
    <location>
        <begin position="123"/>
        <end position="125"/>
    </location>
    <ligand>
        <name>(6S)-5,6,7,8-tetrahydrofolate</name>
        <dbReference type="ChEBI" id="CHEBI:57453"/>
    </ligand>
</feature>
<feature type="binding site" evidence="1">
    <location>
        <begin position="353"/>
        <end position="355"/>
    </location>
    <ligand>
        <name>(6S)-5,6,7,8-tetrahydrofolate</name>
        <dbReference type="ChEBI" id="CHEBI:57453"/>
    </ligand>
</feature>
<feature type="site" description="Plays an important role in substrate specificity" evidence="1">
    <location>
        <position position="227"/>
    </location>
</feature>
<feature type="modified residue" description="N6-(pyridoxal phosphate)lysine" evidence="1">
    <location>
        <position position="228"/>
    </location>
</feature>
<gene>
    <name evidence="1" type="primary">glyA</name>
    <name type="ordered locus">OE_3036F</name>
</gene>
<dbReference type="EC" id="2.1.2.1" evidence="1"/>
<dbReference type="EMBL" id="AM774415">
    <property type="protein sequence ID" value="CAP14016.1"/>
    <property type="molecule type" value="Genomic_DNA"/>
</dbReference>
<dbReference type="RefSeq" id="WP_012289325.1">
    <property type="nucleotide sequence ID" value="NC_010364.1"/>
</dbReference>
<dbReference type="SMR" id="B0R5J9"/>
<dbReference type="EnsemblBacteria" id="CAP14016">
    <property type="protein sequence ID" value="CAP14016"/>
    <property type="gene ID" value="OE_3036F"/>
</dbReference>
<dbReference type="GeneID" id="68694140"/>
<dbReference type="KEGG" id="hsl:OE_3036F"/>
<dbReference type="HOGENOM" id="CLU_022477_2_1_2"/>
<dbReference type="PhylomeDB" id="B0R5J9"/>
<dbReference type="UniPathway" id="UPA00193"/>
<dbReference type="UniPathway" id="UPA00288">
    <property type="reaction ID" value="UER01023"/>
</dbReference>
<dbReference type="Proteomes" id="UP000001321">
    <property type="component" value="Chromosome"/>
</dbReference>
<dbReference type="GO" id="GO:0005737">
    <property type="term" value="C:cytoplasm"/>
    <property type="evidence" value="ECO:0007669"/>
    <property type="project" value="UniProtKB-SubCell"/>
</dbReference>
<dbReference type="GO" id="GO:0004372">
    <property type="term" value="F:glycine hydroxymethyltransferase activity"/>
    <property type="evidence" value="ECO:0007669"/>
    <property type="project" value="UniProtKB-UniRule"/>
</dbReference>
<dbReference type="GO" id="GO:0030170">
    <property type="term" value="F:pyridoxal phosphate binding"/>
    <property type="evidence" value="ECO:0007669"/>
    <property type="project" value="UniProtKB-UniRule"/>
</dbReference>
<dbReference type="GO" id="GO:0019264">
    <property type="term" value="P:glycine biosynthetic process from serine"/>
    <property type="evidence" value="ECO:0007669"/>
    <property type="project" value="UniProtKB-UniRule"/>
</dbReference>
<dbReference type="GO" id="GO:0035999">
    <property type="term" value="P:tetrahydrofolate interconversion"/>
    <property type="evidence" value="ECO:0007669"/>
    <property type="project" value="UniProtKB-UniRule"/>
</dbReference>
<dbReference type="CDD" id="cd00378">
    <property type="entry name" value="SHMT"/>
    <property type="match status" value="1"/>
</dbReference>
<dbReference type="FunFam" id="3.40.640.10:FF:000001">
    <property type="entry name" value="Serine hydroxymethyltransferase"/>
    <property type="match status" value="1"/>
</dbReference>
<dbReference type="Gene3D" id="3.90.1150.10">
    <property type="entry name" value="Aspartate Aminotransferase, domain 1"/>
    <property type="match status" value="1"/>
</dbReference>
<dbReference type="Gene3D" id="3.40.640.10">
    <property type="entry name" value="Type I PLP-dependent aspartate aminotransferase-like (Major domain)"/>
    <property type="match status" value="1"/>
</dbReference>
<dbReference type="HAMAP" id="MF_00051">
    <property type="entry name" value="SHMT"/>
    <property type="match status" value="1"/>
</dbReference>
<dbReference type="InterPro" id="IPR015424">
    <property type="entry name" value="PyrdxlP-dep_Trfase"/>
</dbReference>
<dbReference type="InterPro" id="IPR015421">
    <property type="entry name" value="PyrdxlP-dep_Trfase_major"/>
</dbReference>
<dbReference type="InterPro" id="IPR015422">
    <property type="entry name" value="PyrdxlP-dep_Trfase_small"/>
</dbReference>
<dbReference type="InterPro" id="IPR001085">
    <property type="entry name" value="Ser_HO-MeTrfase"/>
</dbReference>
<dbReference type="InterPro" id="IPR049943">
    <property type="entry name" value="Ser_HO-MeTrfase-like"/>
</dbReference>
<dbReference type="InterPro" id="IPR019798">
    <property type="entry name" value="Ser_HO-MeTrfase_PLP_BS"/>
</dbReference>
<dbReference type="InterPro" id="IPR039429">
    <property type="entry name" value="SHMT-like_dom"/>
</dbReference>
<dbReference type="NCBIfam" id="NF000586">
    <property type="entry name" value="PRK00011.1"/>
    <property type="match status" value="1"/>
</dbReference>
<dbReference type="PANTHER" id="PTHR11680">
    <property type="entry name" value="SERINE HYDROXYMETHYLTRANSFERASE"/>
    <property type="match status" value="1"/>
</dbReference>
<dbReference type="PANTHER" id="PTHR11680:SF35">
    <property type="entry name" value="SERINE HYDROXYMETHYLTRANSFERASE 1"/>
    <property type="match status" value="1"/>
</dbReference>
<dbReference type="Pfam" id="PF00464">
    <property type="entry name" value="SHMT"/>
    <property type="match status" value="1"/>
</dbReference>
<dbReference type="PIRSF" id="PIRSF000412">
    <property type="entry name" value="SHMT"/>
    <property type="match status" value="1"/>
</dbReference>
<dbReference type="SUPFAM" id="SSF53383">
    <property type="entry name" value="PLP-dependent transferases"/>
    <property type="match status" value="1"/>
</dbReference>
<dbReference type="PROSITE" id="PS00096">
    <property type="entry name" value="SHMT"/>
    <property type="match status" value="1"/>
</dbReference>
<sequence length="415" mass="44243">MAYDEVREVDPEVADALTGERHRQNDTLAMIASENHVSEAVMEAQSSELTNKYAEGYPGSRYYGGCEYADDVEELAVARAKELFGADHVNVQPHSGSSANMGVYFATLAPGDKILSLDLTHGGHLSHGHPANFAGQLYEVEQYEVDAETGRLDYEALREHADAFEPDMIVSGFSAYPREVEWERIQAAADAVGALHMADIAHITGLVAAGEHASPVGVADFVTGSTHKTIRAGRGGIVMCDEAFADDIDSAVFPGAQGGPLMHNIAGKAVGFNEALDPAFEEYAAQVVENAAVLGERLQEHGFSLVSGGTDTHLVLVDLRESHPDISGGDVEGELEDVGIVLNANTVPDETRSAFDPSGIRIGTPALTTRGFDADAMETVADCIARVIDNLGDESVYADVADTVADLCEQYPQYE</sequence>
<name>GLYA_HALS3</name>
<reference key="1">
    <citation type="journal article" date="2008" name="Genomics">
        <title>Evolution in the laboratory: the genome of Halobacterium salinarum strain R1 compared to that of strain NRC-1.</title>
        <authorList>
            <person name="Pfeiffer F."/>
            <person name="Schuster S.C."/>
            <person name="Broicher A."/>
            <person name="Falb M."/>
            <person name="Palm P."/>
            <person name="Rodewald K."/>
            <person name="Ruepp A."/>
            <person name="Soppa J."/>
            <person name="Tittor J."/>
            <person name="Oesterhelt D."/>
        </authorList>
    </citation>
    <scope>NUCLEOTIDE SEQUENCE [LARGE SCALE GENOMIC DNA]</scope>
    <source>
        <strain>ATCC 29341 / DSM 671 / R1</strain>
    </source>
</reference>
<proteinExistence type="inferred from homology"/>
<accession>B0R5J9</accession>